<evidence type="ECO:0000255" key="1">
    <source>
        <dbReference type="HAMAP-Rule" id="MF_01503"/>
    </source>
</evidence>
<reference key="1">
    <citation type="journal article" date="2005" name="PLoS Genet.">
        <title>Life in hot carbon monoxide: the complete genome sequence of Carboxydothermus hydrogenoformans Z-2901.</title>
        <authorList>
            <person name="Wu M."/>
            <person name="Ren Q."/>
            <person name="Durkin A.S."/>
            <person name="Daugherty S.C."/>
            <person name="Brinkac L.M."/>
            <person name="Dodson R.J."/>
            <person name="Madupu R."/>
            <person name="Sullivan S.A."/>
            <person name="Kolonay J.F."/>
            <person name="Nelson W.C."/>
            <person name="Tallon L.J."/>
            <person name="Jones K.M."/>
            <person name="Ulrich L.E."/>
            <person name="Gonzalez J.M."/>
            <person name="Zhulin I.B."/>
            <person name="Robb F.T."/>
            <person name="Eisen J.A."/>
        </authorList>
    </citation>
    <scope>NUCLEOTIDE SEQUENCE [LARGE SCALE GENOMIC DNA]</scope>
    <source>
        <strain>ATCC BAA-161 / DSM 6008 / Z-2901</strain>
    </source>
</reference>
<keyword id="KW-1185">Reference proteome</keyword>
<organism>
    <name type="scientific">Carboxydothermus hydrogenoformans (strain ATCC BAA-161 / DSM 6008 / Z-2901)</name>
    <dbReference type="NCBI Taxonomy" id="246194"/>
    <lineage>
        <taxon>Bacteria</taxon>
        <taxon>Bacillati</taxon>
        <taxon>Bacillota</taxon>
        <taxon>Clostridia</taxon>
        <taxon>Thermoanaerobacterales</taxon>
        <taxon>Thermoanaerobacteraceae</taxon>
        <taxon>Carboxydothermus</taxon>
    </lineage>
</organism>
<sequence length="87" mass="9751">MEIKFINIGFGNIVSANRIISIVSPESAPIKRIISEARDKGMLIDATYGRRTRAVIIMDSDHVILSAVQPETVAHRLNTKENQEENF</sequence>
<protein>
    <recommendedName>
        <fullName evidence="1">Putative regulatory protein CHY_1489</fullName>
    </recommendedName>
</protein>
<dbReference type="EMBL" id="CP000141">
    <property type="protein sequence ID" value="ABB15504.1"/>
    <property type="molecule type" value="Genomic_DNA"/>
</dbReference>
<dbReference type="SMR" id="Q3AC13"/>
<dbReference type="FunCoup" id="Q3AC13">
    <property type="interactions" value="4"/>
</dbReference>
<dbReference type="STRING" id="246194.CHY_1489"/>
<dbReference type="KEGG" id="chy:CHY_1489"/>
<dbReference type="eggNOG" id="COG2052">
    <property type="taxonomic scope" value="Bacteria"/>
</dbReference>
<dbReference type="HOGENOM" id="CLU_165326_0_0_9"/>
<dbReference type="InParanoid" id="Q3AC13"/>
<dbReference type="OrthoDB" id="5432174at2"/>
<dbReference type="Proteomes" id="UP000002706">
    <property type="component" value="Chromosome"/>
</dbReference>
<dbReference type="HAMAP" id="MF_01503">
    <property type="entry name" value="RemA"/>
    <property type="match status" value="1"/>
</dbReference>
<dbReference type="InterPro" id="IPR007169">
    <property type="entry name" value="RemA-like"/>
</dbReference>
<dbReference type="NCBIfam" id="NF046064">
    <property type="entry name" value="MtxBflmRegRemA"/>
    <property type="match status" value="1"/>
</dbReference>
<dbReference type="NCBIfam" id="NF003315">
    <property type="entry name" value="PRK04323.1"/>
    <property type="match status" value="1"/>
</dbReference>
<dbReference type="PANTHER" id="PTHR38449:SF1">
    <property type="entry name" value="REGULATORY PROTEIN SSL2874-RELATED"/>
    <property type="match status" value="1"/>
</dbReference>
<dbReference type="PANTHER" id="PTHR38449">
    <property type="entry name" value="REGULATORY PROTEIN TM_1690-RELATED"/>
    <property type="match status" value="1"/>
</dbReference>
<dbReference type="Pfam" id="PF04025">
    <property type="entry name" value="RemA-like"/>
    <property type="match status" value="1"/>
</dbReference>
<accession>Q3AC13</accession>
<comment type="similarity">
    <text evidence="1">Belongs to the RemA family.</text>
</comment>
<gene>
    <name type="ordered locus">CHY_1489</name>
</gene>
<name>Y1489_CARHZ</name>
<proteinExistence type="inferred from homology"/>
<feature type="chain" id="PRO_0000226544" description="Putative regulatory protein CHY_1489">
    <location>
        <begin position="1"/>
        <end position="87"/>
    </location>
</feature>